<gene>
    <name evidence="1" type="primary">trpS</name>
    <name type="ordered locus">jhp_1174</name>
</gene>
<protein>
    <recommendedName>
        <fullName evidence="1">Tryptophan--tRNA ligase</fullName>
        <ecNumber evidence="1">6.1.1.2</ecNumber>
    </recommendedName>
    <alternativeName>
        <fullName evidence="1">Tryptophanyl-tRNA synthetase</fullName>
        <shortName evidence="1">TrpRS</shortName>
    </alternativeName>
</protein>
<sequence>MQKKRVFSGIQPTGQIHLGNYLGAIKHWVELQDEYENLFCIVNSHAITLPIEPIFLKSQTYELVKLLLACGISPKQSGLFIQSEVDEHPALAWLLDCQVSMGEMQRMTQFKDKSLKNPKSVNVGLFNYPILMASDILLYQSDLVPVGEDQKQHLELTRNVAEKFNRDFGNCFKVPEPLIAKVGARVMGLDDPKVKMSKSHKGANHAIFLLDEPDVIVKKIKKAATDSMGVIAFDETREGVFNLLNIYMLLSDESPEKIEERFRNKGYGDFKKELAEVVIQSLKPIQERYQEISDDEVKAVLNCGAEKARPLARATYQKAKELMGLI</sequence>
<proteinExistence type="inferred from homology"/>
<dbReference type="EC" id="6.1.1.2" evidence="1"/>
<dbReference type="EMBL" id="AE001439">
    <property type="protein sequence ID" value="AAD06748.1"/>
    <property type="molecule type" value="Genomic_DNA"/>
</dbReference>
<dbReference type="PIR" id="E71841">
    <property type="entry name" value="E71841"/>
</dbReference>
<dbReference type="RefSeq" id="WP_010882615.1">
    <property type="nucleotide sequence ID" value="NC_000921.1"/>
</dbReference>
<dbReference type="SMR" id="Q9ZJX4"/>
<dbReference type="KEGG" id="hpj:jhp_1174"/>
<dbReference type="PATRIC" id="fig|85963.30.peg.1398"/>
<dbReference type="eggNOG" id="COG0180">
    <property type="taxonomic scope" value="Bacteria"/>
</dbReference>
<dbReference type="Proteomes" id="UP000000804">
    <property type="component" value="Chromosome"/>
</dbReference>
<dbReference type="GO" id="GO:0005829">
    <property type="term" value="C:cytosol"/>
    <property type="evidence" value="ECO:0007669"/>
    <property type="project" value="TreeGrafter"/>
</dbReference>
<dbReference type="GO" id="GO:0005524">
    <property type="term" value="F:ATP binding"/>
    <property type="evidence" value="ECO:0007669"/>
    <property type="project" value="UniProtKB-UniRule"/>
</dbReference>
<dbReference type="GO" id="GO:0004830">
    <property type="term" value="F:tryptophan-tRNA ligase activity"/>
    <property type="evidence" value="ECO:0007669"/>
    <property type="project" value="UniProtKB-UniRule"/>
</dbReference>
<dbReference type="GO" id="GO:0006436">
    <property type="term" value="P:tryptophanyl-tRNA aminoacylation"/>
    <property type="evidence" value="ECO:0007669"/>
    <property type="project" value="UniProtKB-UniRule"/>
</dbReference>
<dbReference type="CDD" id="cd00806">
    <property type="entry name" value="TrpRS_core"/>
    <property type="match status" value="1"/>
</dbReference>
<dbReference type="FunFam" id="1.10.240.10:FF:000002">
    <property type="entry name" value="Tryptophan--tRNA ligase"/>
    <property type="match status" value="1"/>
</dbReference>
<dbReference type="Gene3D" id="3.40.50.620">
    <property type="entry name" value="HUPs"/>
    <property type="match status" value="1"/>
</dbReference>
<dbReference type="Gene3D" id="1.10.240.10">
    <property type="entry name" value="Tyrosyl-Transfer RNA Synthetase"/>
    <property type="match status" value="1"/>
</dbReference>
<dbReference type="HAMAP" id="MF_00140_B">
    <property type="entry name" value="Trp_tRNA_synth_B"/>
    <property type="match status" value="1"/>
</dbReference>
<dbReference type="InterPro" id="IPR001412">
    <property type="entry name" value="aa-tRNA-synth_I_CS"/>
</dbReference>
<dbReference type="InterPro" id="IPR002305">
    <property type="entry name" value="aa-tRNA-synth_Ic"/>
</dbReference>
<dbReference type="InterPro" id="IPR014729">
    <property type="entry name" value="Rossmann-like_a/b/a_fold"/>
</dbReference>
<dbReference type="InterPro" id="IPR002306">
    <property type="entry name" value="Trp-tRNA-ligase"/>
</dbReference>
<dbReference type="InterPro" id="IPR024109">
    <property type="entry name" value="Trp-tRNA-ligase_bac-type"/>
</dbReference>
<dbReference type="InterPro" id="IPR050203">
    <property type="entry name" value="Trp-tRNA_synthetase"/>
</dbReference>
<dbReference type="NCBIfam" id="TIGR00233">
    <property type="entry name" value="trpS"/>
    <property type="match status" value="1"/>
</dbReference>
<dbReference type="PANTHER" id="PTHR43766">
    <property type="entry name" value="TRYPTOPHAN--TRNA LIGASE, MITOCHONDRIAL"/>
    <property type="match status" value="1"/>
</dbReference>
<dbReference type="PANTHER" id="PTHR43766:SF1">
    <property type="entry name" value="TRYPTOPHAN--TRNA LIGASE, MITOCHONDRIAL"/>
    <property type="match status" value="1"/>
</dbReference>
<dbReference type="Pfam" id="PF00579">
    <property type="entry name" value="tRNA-synt_1b"/>
    <property type="match status" value="1"/>
</dbReference>
<dbReference type="PRINTS" id="PR01039">
    <property type="entry name" value="TRNASYNTHTRP"/>
</dbReference>
<dbReference type="SUPFAM" id="SSF52374">
    <property type="entry name" value="Nucleotidylyl transferase"/>
    <property type="match status" value="1"/>
</dbReference>
<dbReference type="PROSITE" id="PS00178">
    <property type="entry name" value="AA_TRNA_LIGASE_I"/>
    <property type="match status" value="1"/>
</dbReference>
<feature type="chain" id="PRO_0000136638" description="Tryptophan--tRNA ligase">
    <location>
        <begin position="1"/>
        <end position="326"/>
    </location>
</feature>
<feature type="short sequence motif" description="'HIGH' region" evidence="1">
    <location>
        <begin position="12"/>
        <end position="20"/>
    </location>
</feature>
<feature type="short sequence motif" description="'KMSKS' region" evidence="1">
    <location>
        <begin position="195"/>
        <end position="199"/>
    </location>
</feature>
<feature type="binding site" evidence="1">
    <location>
        <begin position="11"/>
        <end position="13"/>
    </location>
    <ligand>
        <name>ATP</name>
        <dbReference type="ChEBI" id="CHEBI:30616"/>
    </ligand>
</feature>
<feature type="binding site" evidence="1">
    <location>
        <begin position="19"/>
        <end position="20"/>
    </location>
    <ligand>
        <name>ATP</name>
        <dbReference type="ChEBI" id="CHEBI:30616"/>
    </ligand>
</feature>
<feature type="binding site" evidence="1">
    <location>
        <position position="135"/>
    </location>
    <ligand>
        <name>L-tryptophan</name>
        <dbReference type="ChEBI" id="CHEBI:57912"/>
    </ligand>
</feature>
<feature type="binding site" evidence="1">
    <location>
        <begin position="147"/>
        <end position="149"/>
    </location>
    <ligand>
        <name>ATP</name>
        <dbReference type="ChEBI" id="CHEBI:30616"/>
    </ligand>
</feature>
<feature type="binding site" evidence="1">
    <location>
        <position position="186"/>
    </location>
    <ligand>
        <name>ATP</name>
        <dbReference type="ChEBI" id="CHEBI:30616"/>
    </ligand>
</feature>
<feature type="binding site" evidence="1">
    <location>
        <begin position="195"/>
        <end position="199"/>
    </location>
    <ligand>
        <name>ATP</name>
        <dbReference type="ChEBI" id="CHEBI:30616"/>
    </ligand>
</feature>
<keyword id="KW-0030">Aminoacyl-tRNA synthetase</keyword>
<keyword id="KW-0067">ATP-binding</keyword>
<keyword id="KW-0963">Cytoplasm</keyword>
<keyword id="KW-0436">Ligase</keyword>
<keyword id="KW-0547">Nucleotide-binding</keyword>
<keyword id="KW-0648">Protein biosynthesis</keyword>
<comment type="function">
    <text evidence="1">Catalyzes the attachment of tryptophan to tRNA(Trp).</text>
</comment>
<comment type="catalytic activity">
    <reaction evidence="1">
        <text>tRNA(Trp) + L-tryptophan + ATP = L-tryptophyl-tRNA(Trp) + AMP + diphosphate + H(+)</text>
        <dbReference type="Rhea" id="RHEA:24080"/>
        <dbReference type="Rhea" id="RHEA-COMP:9671"/>
        <dbReference type="Rhea" id="RHEA-COMP:9705"/>
        <dbReference type="ChEBI" id="CHEBI:15378"/>
        <dbReference type="ChEBI" id="CHEBI:30616"/>
        <dbReference type="ChEBI" id="CHEBI:33019"/>
        <dbReference type="ChEBI" id="CHEBI:57912"/>
        <dbReference type="ChEBI" id="CHEBI:78442"/>
        <dbReference type="ChEBI" id="CHEBI:78535"/>
        <dbReference type="ChEBI" id="CHEBI:456215"/>
        <dbReference type="EC" id="6.1.1.2"/>
    </reaction>
</comment>
<comment type="subunit">
    <text evidence="1">Homodimer.</text>
</comment>
<comment type="subcellular location">
    <subcellularLocation>
        <location evidence="1">Cytoplasm</location>
    </subcellularLocation>
</comment>
<comment type="similarity">
    <text evidence="1">Belongs to the class-I aminoacyl-tRNA synthetase family.</text>
</comment>
<name>SYW_HELPJ</name>
<organism>
    <name type="scientific">Helicobacter pylori (strain J99 / ATCC 700824)</name>
    <name type="common">Campylobacter pylori J99</name>
    <dbReference type="NCBI Taxonomy" id="85963"/>
    <lineage>
        <taxon>Bacteria</taxon>
        <taxon>Pseudomonadati</taxon>
        <taxon>Campylobacterota</taxon>
        <taxon>Epsilonproteobacteria</taxon>
        <taxon>Campylobacterales</taxon>
        <taxon>Helicobacteraceae</taxon>
        <taxon>Helicobacter</taxon>
    </lineage>
</organism>
<reference key="1">
    <citation type="journal article" date="1999" name="Nature">
        <title>Genomic sequence comparison of two unrelated isolates of the human gastric pathogen Helicobacter pylori.</title>
        <authorList>
            <person name="Alm R.A."/>
            <person name="Ling L.-S.L."/>
            <person name="Moir D.T."/>
            <person name="King B.L."/>
            <person name="Brown E.D."/>
            <person name="Doig P.C."/>
            <person name="Smith D.R."/>
            <person name="Noonan B."/>
            <person name="Guild B.C."/>
            <person name="deJonge B.L."/>
            <person name="Carmel G."/>
            <person name="Tummino P.J."/>
            <person name="Caruso A."/>
            <person name="Uria-Nickelsen M."/>
            <person name="Mills D.M."/>
            <person name="Ives C."/>
            <person name="Gibson R."/>
            <person name="Merberg D."/>
            <person name="Mills S.D."/>
            <person name="Jiang Q."/>
            <person name="Taylor D.E."/>
            <person name="Vovis G.F."/>
            <person name="Trust T.J."/>
        </authorList>
    </citation>
    <scope>NUCLEOTIDE SEQUENCE [LARGE SCALE GENOMIC DNA]</scope>
    <source>
        <strain>J99 / ATCC 700824</strain>
    </source>
</reference>
<accession>Q9ZJX4</accession>
<evidence type="ECO:0000255" key="1">
    <source>
        <dbReference type="HAMAP-Rule" id="MF_00140"/>
    </source>
</evidence>